<reference key="1">
    <citation type="submission" date="2007-11" db="EMBL/GenBank/DDBJ databases">
        <title>Complete sequence of Petroga mobilis SJ95.</title>
        <authorList>
            <consortium name="US DOE Joint Genome Institute"/>
            <person name="Copeland A."/>
            <person name="Lucas S."/>
            <person name="Lapidus A."/>
            <person name="Barry K."/>
            <person name="Glavina del Rio T."/>
            <person name="Dalin E."/>
            <person name="Tice H."/>
            <person name="Pitluck S."/>
            <person name="Meincke L."/>
            <person name="Brettin T."/>
            <person name="Bruce D."/>
            <person name="Detter J.C."/>
            <person name="Han C."/>
            <person name="Kuske C.R."/>
            <person name="Schmutz J."/>
            <person name="Larimer F."/>
            <person name="Land M."/>
            <person name="Hauser L."/>
            <person name="Kyrpides N."/>
            <person name="Mikhailova N."/>
            <person name="Noll K."/>
            <person name="Richardson P."/>
        </authorList>
    </citation>
    <scope>NUCLEOTIDE SEQUENCE [LARGE SCALE GENOMIC DNA]</scope>
    <source>
        <strain>DSM 10674 / SJ95</strain>
    </source>
</reference>
<keyword id="KW-0028">Amino-acid biosynthesis</keyword>
<keyword id="KW-0055">Arginine biosynthesis</keyword>
<keyword id="KW-0067">ATP-binding</keyword>
<keyword id="KW-0963">Cytoplasm</keyword>
<keyword id="KW-0418">Kinase</keyword>
<keyword id="KW-0547">Nucleotide-binding</keyword>
<keyword id="KW-0808">Transferase</keyword>
<gene>
    <name evidence="1" type="primary">argB</name>
    <name type="ordered locus">Pmob_1697</name>
</gene>
<organism>
    <name type="scientific">Petrotoga mobilis (strain DSM 10674 / SJ95)</name>
    <dbReference type="NCBI Taxonomy" id="403833"/>
    <lineage>
        <taxon>Bacteria</taxon>
        <taxon>Thermotogati</taxon>
        <taxon>Thermotogota</taxon>
        <taxon>Thermotogae</taxon>
        <taxon>Petrotogales</taxon>
        <taxon>Petrotogaceae</taxon>
        <taxon>Petrotoga</taxon>
    </lineage>
</organism>
<name>ARGB_PETMO</name>
<evidence type="ECO:0000255" key="1">
    <source>
        <dbReference type="HAMAP-Rule" id="MF_00082"/>
    </source>
</evidence>
<dbReference type="EC" id="2.7.2.8" evidence="1"/>
<dbReference type="EMBL" id="CP000879">
    <property type="protein sequence ID" value="ABX32390.1"/>
    <property type="molecule type" value="Genomic_DNA"/>
</dbReference>
<dbReference type="RefSeq" id="WP_012209487.1">
    <property type="nucleotide sequence ID" value="NC_010003.1"/>
</dbReference>
<dbReference type="SMR" id="A9BI99"/>
<dbReference type="STRING" id="403833.Pmob_1697"/>
<dbReference type="KEGG" id="pmo:Pmob_1697"/>
<dbReference type="eggNOG" id="COG0548">
    <property type="taxonomic scope" value="Bacteria"/>
</dbReference>
<dbReference type="HOGENOM" id="CLU_053680_0_0_0"/>
<dbReference type="OrthoDB" id="9803155at2"/>
<dbReference type="UniPathway" id="UPA00068">
    <property type="reaction ID" value="UER00107"/>
</dbReference>
<dbReference type="Proteomes" id="UP000000789">
    <property type="component" value="Chromosome"/>
</dbReference>
<dbReference type="GO" id="GO:0005737">
    <property type="term" value="C:cytoplasm"/>
    <property type="evidence" value="ECO:0007669"/>
    <property type="project" value="UniProtKB-SubCell"/>
</dbReference>
<dbReference type="GO" id="GO:0003991">
    <property type="term" value="F:acetylglutamate kinase activity"/>
    <property type="evidence" value="ECO:0007669"/>
    <property type="project" value="UniProtKB-UniRule"/>
</dbReference>
<dbReference type="GO" id="GO:0005524">
    <property type="term" value="F:ATP binding"/>
    <property type="evidence" value="ECO:0007669"/>
    <property type="project" value="UniProtKB-UniRule"/>
</dbReference>
<dbReference type="GO" id="GO:0042450">
    <property type="term" value="P:arginine biosynthetic process via ornithine"/>
    <property type="evidence" value="ECO:0007669"/>
    <property type="project" value="UniProtKB-UniRule"/>
</dbReference>
<dbReference type="GO" id="GO:0006526">
    <property type="term" value="P:L-arginine biosynthetic process"/>
    <property type="evidence" value="ECO:0007669"/>
    <property type="project" value="UniProtKB-UniPathway"/>
</dbReference>
<dbReference type="CDD" id="cd04250">
    <property type="entry name" value="AAK_NAGK-C"/>
    <property type="match status" value="1"/>
</dbReference>
<dbReference type="FunFam" id="3.40.1160.10:FF:000004">
    <property type="entry name" value="Acetylglutamate kinase"/>
    <property type="match status" value="1"/>
</dbReference>
<dbReference type="Gene3D" id="3.40.1160.10">
    <property type="entry name" value="Acetylglutamate kinase-like"/>
    <property type="match status" value="1"/>
</dbReference>
<dbReference type="HAMAP" id="MF_00082">
    <property type="entry name" value="ArgB"/>
    <property type="match status" value="1"/>
</dbReference>
<dbReference type="InterPro" id="IPR036393">
    <property type="entry name" value="AceGlu_kinase-like_sf"/>
</dbReference>
<dbReference type="InterPro" id="IPR004662">
    <property type="entry name" value="AcgluKinase_fam"/>
</dbReference>
<dbReference type="InterPro" id="IPR037528">
    <property type="entry name" value="ArgB"/>
</dbReference>
<dbReference type="InterPro" id="IPR001048">
    <property type="entry name" value="Asp/Glu/Uridylate_kinase"/>
</dbReference>
<dbReference type="InterPro" id="IPR001057">
    <property type="entry name" value="Glu/AcGlu_kinase"/>
</dbReference>
<dbReference type="InterPro" id="IPR041727">
    <property type="entry name" value="NAGK-C"/>
</dbReference>
<dbReference type="NCBIfam" id="TIGR00761">
    <property type="entry name" value="argB"/>
    <property type="match status" value="1"/>
</dbReference>
<dbReference type="PANTHER" id="PTHR23342">
    <property type="entry name" value="N-ACETYLGLUTAMATE SYNTHASE"/>
    <property type="match status" value="1"/>
</dbReference>
<dbReference type="PANTHER" id="PTHR23342:SF0">
    <property type="entry name" value="N-ACETYLGLUTAMATE SYNTHASE, MITOCHONDRIAL"/>
    <property type="match status" value="1"/>
</dbReference>
<dbReference type="Pfam" id="PF00696">
    <property type="entry name" value="AA_kinase"/>
    <property type="match status" value="1"/>
</dbReference>
<dbReference type="PIRSF" id="PIRSF000728">
    <property type="entry name" value="NAGK"/>
    <property type="match status" value="1"/>
</dbReference>
<dbReference type="PRINTS" id="PR00474">
    <property type="entry name" value="GLU5KINASE"/>
</dbReference>
<dbReference type="SUPFAM" id="SSF53633">
    <property type="entry name" value="Carbamate kinase-like"/>
    <property type="match status" value="1"/>
</dbReference>
<proteinExistence type="inferred from homology"/>
<comment type="function">
    <text evidence="1">Catalyzes the ATP-dependent phosphorylation of N-acetyl-L-glutamate.</text>
</comment>
<comment type="catalytic activity">
    <reaction evidence="1">
        <text>N-acetyl-L-glutamate + ATP = N-acetyl-L-glutamyl 5-phosphate + ADP</text>
        <dbReference type="Rhea" id="RHEA:14629"/>
        <dbReference type="ChEBI" id="CHEBI:30616"/>
        <dbReference type="ChEBI" id="CHEBI:44337"/>
        <dbReference type="ChEBI" id="CHEBI:57936"/>
        <dbReference type="ChEBI" id="CHEBI:456216"/>
        <dbReference type="EC" id="2.7.2.8"/>
    </reaction>
</comment>
<comment type="pathway">
    <text evidence="1">Amino-acid biosynthesis; L-arginine biosynthesis; N(2)-acetyl-L-ornithine from L-glutamate: step 2/4.</text>
</comment>
<comment type="subcellular location">
    <subcellularLocation>
        <location evidence="1">Cytoplasm</location>
    </subcellularLocation>
</comment>
<comment type="similarity">
    <text evidence="1">Belongs to the acetylglutamate kinase family. ArgB subfamily.</text>
</comment>
<sequence length="299" mass="32600">MIKVEKFSDEISKAEVLVEALPYIKKFAGSIAVIKFGGNAMKDPQIKSMVAEDIVLMKYVGLNPVIVHGGGPDINKMLASLNIETKFVNGLRVTDEKVMEIVEMVLVGKINKEITSLINKTGGKAVGLSGKDANLLLAEKDLSQGDLGYVGKVVNVNREVILNLIEKDYIPVIAPCAIGRDWKTYNVNADIAAGKIASSLNADKFVLLTDVEGVLKNKEDEESVISRLSYREAKDLLNSQFITGGMIPKLKCCIQALEDGVKRAHIIDGRIPHALLLEIYTDKGVGTMIAKEVYDNDNL</sequence>
<protein>
    <recommendedName>
        <fullName evidence="1">Acetylglutamate kinase</fullName>
        <ecNumber evidence="1">2.7.2.8</ecNumber>
    </recommendedName>
    <alternativeName>
        <fullName evidence="1">N-acetyl-L-glutamate 5-phosphotransferase</fullName>
    </alternativeName>
    <alternativeName>
        <fullName evidence="1">NAG kinase</fullName>
        <shortName evidence="1">NAGK</shortName>
    </alternativeName>
</protein>
<accession>A9BI99</accession>
<feature type="chain" id="PRO_0000335652" description="Acetylglutamate kinase">
    <location>
        <begin position="1"/>
        <end position="299"/>
    </location>
</feature>
<feature type="binding site" evidence="1">
    <location>
        <begin position="70"/>
        <end position="71"/>
    </location>
    <ligand>
        <name>substrate</name>
    </ligand>
</feature>
<feature type="binding site" evidence="1">
    <location>
        <position position="92"/>
    </location>
    <ligand>
        <name>substrate</name>
    </ligand>
</feature>
<feature type="binding site" evidence="1">
    <location>
        <position position="186"/>
    </location>
    <ligand>
        <name>substrate</name>
    </ligand>
</feature>
<feature type="site" description="Transition state stabilizer" evidence="1">
    <location>
        <position position="35"/>
    </location>
</feature>
<feature type="site" description="Transition state stabilizer" evidence="1">
    <location>
        <position position="249"/>
    </location>
</feature>